<name>DRD2_CHLAE</name>
<comment type="function">
    <text evidence="3 8">Dopamine receptor whose activity is mediated by G proteins which inhibit adenylyl cyclase (PubMed:7783157). Positively regulates postnatal regression of retinal hyaloid vessels via suppression of VEGFR2/KDR activity, downstream of OPN5 (By similarity).</text>
</comment>
<comment type="subunit">
    <text evidence="2 3 4">Forms homo- and heterooligomers with DRD4. The interaction with DRD4 may modulate agonist-induced downstream signaling. Interacts with CADPS and CADPS2 (By similarity). Interacts with GPRASP1, PPP1R9B and CLIC6. Interacts with ARRB2 (By similarity). Interacts with HTR2A (By similarity). Interacts with DRD1. Interacts with KCNA2 (By similarity).</text>
</comment>
<comment type="subcellular location">
    <subcellularLocation>
        <location evidence="2">Cell membrane</location>
        <topology evidence="5">Multi-pass membrane protein</topology>
    </subcellularLocation>
    <subcellularLocation>
        <location evidence="2">Golgi apparatus membrane</location>
        <topology evidence="5">Multi-pass membrane protein</topology>
    </subcellularLocation>
</comment>
<comment type="PTM">
    <text evidence="2">Palmitoylated. Palmitoylation which is required for proper localization to the plasma membrane and stability of the receptor could be carried on by ZDHHC4, ZDHHC3 and ZDHHC8.</text>
</comment>
<comment type="similarity">
    <text evidence="6">Belongs to the G-protein coupled receptor 1 family.</text>
</comment>
<feature type="chain" id="PRO_0000069386" description="D(2) dopamine receptor">
    <location>
        <begin position="1"/>
        <end position="443"/>
    </location>
</feature>
<feature type="topological domain" description="Extracellular" evidence="1">
    <location>
        <begin position="1"/>
        <end position="37"/>
    </location>
</feature>
<feature type="transmembrane region" description="Helical; Name=1" evidence="1">
    <location>
        <begin position="38"/>
        <end position="60"/>
    </location>
</feature>
<feature type="topological domain" description="Cytoplasmic" evidence="1">
    <location>
        <begin position="61"/>
        <end position="70"/>
    </location>
</feature>
<feature type="transmembrane region" description="Helical; Name=2" evidence="1">
    <location>
        <begin position="71"/>
        <end position="93"/>
    </location>
</feature>
<feature type="topological domain" description="Extracellular" evidence="1">
    <location>
        <begin position="94"/>
        <end position="108"/>
    </location>
</feature>
<feature type="transmembrane region" description="Helical; Name=3" evidence="1">
    <location>
        <begin position="109"/>
        <end position="130"/>
    </location>
</feature>
<feature type="topological domain" description="Cytoplasmic" evidence="1">
    <location>
        <begin position="131"/>
        <end position="151"/>
    </location>
</feature>
<feature type="transmembrane region" description="Helical; Name=4" evidence="1">
    <location>
        <begin position="152"/>
        <end position="172"/>
    </location>
</feature>
<feature type="topological domain" description="Extracellular" evidence="1">
    <location>
        <begin position="173"/>
        <end position="188"/>
    </location>
</feature>
<feature type="transmembrane region" description="Helical; Name=5" evidence="1">
    <location>
        <begin position="189"/>
        <end position="213"/>
    </location>
</feature>
<feature type="topological domain" description="Cytoplasmic" evidence="1">
    <location>
        <begin position="214"/>
        <end position="373"/>
    </location>
</feature>
<feature type="transmembrane region" description="Helical; Name=6" evidence="1">
    <location>
        <begin position="374"/>
        <end position="395"/>
    </location>
</feature>
<feature type="topological domain" description="Extracellular" evidence="1">
    <location>
        <begin position="396"/>
        <end position="409"/>
    </location>
</feature>
<feature type="transmembrane region" description="Helical; Name=7" evidence="1">
    <location>
        <begin position="410"/>
        <end position="431"/>
    </location>
</feature>
<feature type="topological domain" description="Cytoplasmic" evidence="1">
    <location>
        <begin position="432"/>
        <end position="443"/>
    </location>
</feature>
<feature type="region of interest" description="Interaction with PPP1R9B" evidence="1">
    <location>
        <begin position="211"/>
        <end position="373"/>
    </location>
</feature>
<feature type="region of interest" description="Disordered" evidence="7">
    <location>
        <begin position="281"/>
        <end position="332"/>
    </location>
</feature>
<feature type="site" description="Important for receptor activation" evidence="1">
    <location>
        <position position="194"/>
    </location>
</feature>
<feature type="site" description="Important for receptor activation" evidence="1">
    <location>
        <position position="197"/>
    </location>
</feature>
<feature type="lipid moiety-binding region" description="S-palmitoyl cysteine" evidence="2">
    <location>
        <position position="443"/>
    </location>
</feature>
<feature type="glycosylation site" description="N-linked (GlcNAc...) asparagine" evidence="5">
    <location>
        <position position="5"/>
    </location>
</feature>
<feature type="glycosylation site" description="N-linked (GlcNAc...) asparagine" evidence="5">
    <location>
        <position position="17"/>
    </location>
</feature>
<feature type="glycosylation site" description="N-linked (GlcNAc...) asparagine" evidence="5">
    <location>
        <position position="23"/>
    </location>
</feature>
<feature type="disulfide bond" evidence="6">
    <location>
        <begin position="107"/>
        <end position="182"/>
    </location>
</feature>
<feature type="disulfide bond" evidence="6">
    <location>
        <begin position="399"/>
        <end position="401"/>
    </location>
</feature>
<reference key="1">
    <citation type="journal article" date="1995" name="J. Med. Chem.">
        <title>2-phenyl-4-(aminomethyl)imidazoles as potential antipsychotic agents. Synthesis and dopamine D2 receptor binding.</title>
        <authorList>
            <person name="Thurkauf A."/>
            <person name="Hutchinson A."/>
            <person name="Peterson J."/>
            <person name="Cornfield L."/>
            <person name="Meade R."/>
            <person name="Houston K."/>
            <person name="Harris K."/>
            <person name="Ross P.C."/>
            <person name="Gerber K."/>
            <person name="Ramabhadran T.V."/>
        </authorList>
    </citation>
    <scope>NUCLEOTIDE SEQUENCE [MRNA]</scope>
    <scope>FUNCTION</scope>
    <source>
        <tissue>Brain</tissue>
    </source>
</reference>
<protein>
    <recommendedName>
        <fullName>D(2) dopamine receptor</fullName>
    </recommendedName>
    <alternativeName>
        <fullName>Dopamine D2 receptor</fullName>
    </alternativeName>
</protein>
<dbReference type="EMBL" id="U18547">
    <property type="protein sequence ID" value="AAB60369.1"/>
    <property type="molecule type" value="mRNA"/>
</dbReference>
<dbReference type="SMR" id="P52702"/>
<dbReference type="BindingDB" id="P52702"/>
<dbReference type="ChEMBL" id="CHEMBL5456"/>
<dbReference type="DrugCentral" id="P52702"/>
<dbReference type="GlyCosmos" id="P52702">
    <property type="glycosylation" value="3 sites, No reported glycans"/>
</dbReference>
<dbReference type="GO" id="GO:0098978">
    <property type="term" value="C:glutamatergic synapse"/>
    <property type="evidence" value="ECO:0007669"/>
    <property type="project" value="TreeGrafter"/>
</dbReference>
<dbReference type="GO" id="GO:0000139">
    <property type="term" value="C:Golgi membrane"/>
    <property type="evidence" value="ECO:0007669"/>
    <property type="project" value="UniProtKB-SubCell"/>
</dbReference>
<dbReference type="GO" id="GO:0042734">
    <property type="term" value="C:presynaptic membrane"/>
    <property type="evidence" value="ECO:0007669"/>
    <property type="project" value="TreeGrafter"/>
</dbReference>
<dbReference type="GO" id="GO:0001591">
    <property type="term" value="F:dopamine neurotransmitter receptor activity, coupled via Gi/Go"/>
    <property type="evidence" value="ECO:0007669"/>
    <property type="project" value="TreeGrafter"/>
</dbReference>
<dbReference type="GO" id="GO:0004930">
    <property type="term" value="F:G protein-coupled receptor activity"/>
    <property type="evidence" value="ECO:0007669"/>
    <property type="project" value="UniProtKB-KW"/>
</dbReference>
<dbReference type="GO" id="GO:0007195">
    <property type="term" value="P:adenylate cyclase-inhibiting dopamine receptor signaling pathway"/>
    <property type="evidence" value="ECO:0007669"/>
    <property type="project" value="InterPro"/>
</dbReference>
<dbReference type="GO" id="GO:1990384">
    <property type="term" value="P:hyaloid vascular plexus regression"/>
    <property type="evidence" value="ECO:0000250"/>
    <property type="project" value="UniProtKB"/>
</dbReference>
<dbReference type="GO" id="GO:0051481">
    <property type="term" value="P:negative regulation of cytosolic calcium ion concentration"/>
    <property type="evidence" value="ECO:0007669"/>
    <property type="project" value="TreeGrafter"/>
</dbReference>
<dbReference type="GO" id="GO:0051967">
    <property type="term" value="P:negative regulation of synaptic transmission, glutamatergic"/>
    <property type="evidence" value="ECO:0007669"/>
    <property type="project" value="TreeGrafter"/>
</dbReference>
<dbReference type="GO" id="GO:0060158">
    <property type="term" value="P:phospholipase C-activating dopamine receptor signaling pathway"/>
    <property type="evidence" value="ECO:0007669"/>
    <property type="project" value="TreeGrafter"/>
</dbReference>
<dbReference type="GO" id="GO:0014059">
    <property type="term" value="P:regulation of dopamine secretion"/>
    <property type="evidence" value="ECO:0007669"/>
    <property type="project" value="TreeGrafter"/>
</dbReference>
<dbReference type="GO" id="GO:0043266">
    <property type="term" value="P:regulation of potassium ion transport"/>
    <property type="evidence" value="ECO:0007669"/>
    <property type="project" value="TreeGrafter"/>
</dbReference>
<dbReference type="CDD" id="cd15309">
    <property type="entry name" value="7tmA_D2_dopamine_R"/>
    <property type="match status" value="1"/>
</dbReference>
<dbReference type="FunFam" id="1.20.1070.10:FF:000099">
    <property type="entry name" value="D(2) dopamine receptor"/>
    <property type="match status" value="1"/>
</dbReference>
<dbReference type="FunFam" id="1.20.1070.10:FF:000086">
    <property type="entry name" value="Dopamine D2 receptor 2"/>
    <property type="match status" value="1"/>
</dbReference>
<dbReference type="Gene3D" id="1.20.1070.10">
    <property type="entry name" value="Rhodopsin 7-helix transmembrane proteins"/>
    <property type="match status" value="2"/>
</dbReference>
<dbReference type="InterPro" id="IPR001922">
    <property type="entry name" value="Dopamine_D2_rcpt"/>
</dbReference>
<dbReference type="InterPro" id="IPR000929">
    <property type="entry name" value="Dopamine_rcpt"/>
</dbReference>
<dbReference type="InterPro" id="IPR000276">
    <property type="entry name" value="GPCR_Rhodpsn"/>
</dbReference>
<dbReference type="InterPro" id="IPR017452">
    <property type="entry name" value="GPCR_Rhodpsn_7TM"/>
</dbReference>
<dbReference type="PANTHER" id="PTHR24248">
    <property type="entry name" value="ADRENERGIC RECEPTOR-RELATED G-PROTEIN COUPLED RECEPTOR"/>
    <property type="match status" value="1"/>
</dbReference>
<dbReference type="PANTHER" id="PTHR24248:SF87">
    <property type="entry name" value="D(2) DOPAMINE RECEPTOR"/>
    <property type="match status" value="1"/>
</dbReference>
<dbReference type="Pfam" id="PF00001">
    <property type="entry name" value="7tm_1"/>
    <property type="match status" value="1"/>
</dbReference>
<dbReference type="PRINTS" id="PR00567">
    <property type="entry name" value="DOPAMINED2R"/>
</dbReference>
<dbReference type="PRINTS" id="PR00242">
    <property type="entry name" value="DOPAMINER"/>
</dbReference>
<dbReference type="PRINTS" id="PR00237">
    <property type="entry name" value="GPCRRHODOPSN"/>
</dbReference>
<dbReference type="SMART" id="SM01381">
    <property type="entry name" value="7TM_GPCR_Srsx"/>
    <property type="match status" value="1"/>
</dbReference>
<dbReference type="SUPFAM" id="SSF81321">
    <property type="entry name" value="Family A G protein-coupled receptor-like"/>
    <property type="match status" value="1"/>
</dbReference>
<dbReference type="PROSITE" id="PS00237">
    <property type="entry name" value="G_PROTEIN_RECEP_F1_1"/>
    <property type="match status" value="1"/>
</dbReference>
<dbReference type="PROSITE" id="PS50262">
    <property type="entry name" value="G_PROTEIN_RECEP_F1_2"/>
    <property type="match status" value="1"/>
</dbReference>
<evidence type="ECO:0000250" key="1"/>
<evidence type="ECO:0000250" key="2">
    <source>
        <dbReference type="UniProtKB" id="P14416"/>
    </source>
</evidence>
<evidence type="ECO:0000250" key="3">
    <source>
        <dbReference type="UniProtKB" id="P61168"/>
    </source>
</evidence>
<evidence type="ECO:0000250" key="4">
    <source>
        <dbReference type="UniProtKB" id="P61169"/>
    </source>
</evidence>
<evidence type="ECO:0000255" key="5"/>
<evidence type="ECO:0000255" key="6">
    <source>
        <dbReference type="PROSITE-ProRule" id="PRU00521"/>
    </source>
</evidence>
<evidence type="ECO:0000256" key="7">
    <source>
        <dbReference type="SAM" id="MobiDB-lite"/>
    </source>
</evidence>
<evidence type="ECO:0000269" key="8">
    <source>
    </source>
</evidence>
<keyword id="KW-1003">Cell membrane</keyword>
<keyword id="KW-1015">Disulfide bond</keyword>
<keyword id="KW-0297">G-protein coupled receptor</keyword>
<keyword id="KW-0325">Glycoprotein</keyword>
<keyword id="KW-0333">Golgi apparatus</keyword>
<keyword id="KW-0449">Lipoprotein</keyword>
<keyword id="KW-0472">Membrane</keyword>
<keyword id="KW-0564">Palmitate</keyword>
<keyword id="KW-0675">Receptor</keyword>
<keyword id="KW-0807">Transducer</keyword>
<keyword id="KW-0812">Transmembrane</keyword>
<keyword id="KW-1133">Transmembrane helix</keyword>
<accession>P52702</accession>
<sequence length="443" mass="50590">MDPLNLSWYDDDLERQNWSRPFNGSDGKADRPHYNYYATLLTLLIAVIVFGNVLVCMAVSREKALQTTTNYLIVSLAVADLLVATLVMPWVVYLEVVGEWKFSKIHCDIFVTLDVMMCTASILNLCAISIDRYTAVAMPMLYNTRYSSKRRVTVMIAIVWVLSFTISCPLLFGLNNADQNECIIANPAFVVYSSIVSFYVPFIVTLLVYIKIYIVLRRRRKRVNTKRSSRAFRSHLRAPLKGNCTHPEDMKLCTVIMKSNGSFPVNRRRVEAARRAQELEMEMLSSTSPPERTRYSPIPPSHHQLTLPDPSHHGLHSTPDSPAKPEKNGHAKNHPKIAKIFEIQTMPNGKTRTSLKTMSRRKLSQQKEKKATQMLAIVLGVFIICWLPFFITHILNIHCDCNIPPVLYSAFTWLGYVNSAVNPIIYTTFNIEFRKAFLKILHC</sequence>
<organism>
    <name type="scientific">Chlorocebus aethiops</name>
    <name type="common">Green monkey</name>
    <name type="synonym">Cercopithecus aethiops</name>
    <dbReference type="NCBI Taxonomy" id="9534"/>
    <lineage>
        <taxon>Eukaryota</taxon>
        <taxon>Metazoa</taxon>
        <taxon>Chordata</taxon>
        <taxon>Craniata</taxon>
        <taxon>Vertebrata</taxon>
        <taxon>Euteleostomi</taxon>
        <taxon>Mammalia</taxon>
        <taxon>Eutheria</taxon>
        <taxon>Euarchontoglires</taxon>
        <taxon>Primates</taxon>
        <taxon>Haplorrhini</taxon>
        <taxon>Catarrhini</taxon>
        <taxon>Cercopithecidae</taxon>
        <taxon>Cercopithecinae</taxon>
        <taxon>Chlorocebus</taxon>
    </lineage>
</organism>
<proteinExistence type="evidence at transcript level"/>
<gene>
    <name type="primary">DRD2</name>
</gene>